<evidence type="ECO:0000255" key="1">
    <source>
        <dbReference type="HAMAP-Rule" id="MF_00006"/>
    </source>
</evidence>
<gene>
    <name evidence="1" type="primary">argH</name>
    <name type="ordered locus">SACOL0963</name>
</gene>
<keyword id="KW-0028">Amino-acid biosynthesis</keyword>
<keyword id="KW-0055">Arginine biosynthesis</keyword>
<keyword id="KW-0963">Cytoplasm</keyword>
<keyword id="KW-0456">Lyase</keyword>
<protein>
    <recommendedName>
        <fullName evidence="1">Argininosuccinate lyase</fullName>
        <shortName evidence="1">ASAL</shortName>
        <ecNumber evidence="1">4.3.2.1</ecNumber>
    </recommendedName>
    <alternativeName>
        <fullName evidence="1">Arginosuccinase</fullName>
    </alternativeName>
</protein>
<organism>
    <name type="scientific">Staphylococcus aureus (strain COL)</name>
    <dbReference type="NCBI Taxonomy" id="93062"/>
    <lineage>
        <taxon>Bacteria</taxon>
        <taxon>Bacillati</taxon>
        <taxon>Bacillota</taxon>
        <taxon>Bacilli</taxon>
        <taxon>Bacillales</taxon>
        <taxon>Staphylococcaceae</taxon>
        <taxon>Staphylococcus</taxon>
    </lineage>
</organism>
<reference key="1">
    <citation type="journal article" date="2005" name="J. Bacteriol.">
        <title>Insights on evolution of virulence and resistance from the complete genome analysis of an early methicillin-resistant Staphylococcus aureus strain and a biofilm-producing methicillin-resistant Staphylococcus epidermidis strain.</title>
        <authorList>
            <person name="Gill S.R."/>
            <person name="Fouts D.E."/>
            <person name="Archer G.L."/>
            <person name="Mongodin E.F."/>
            <person name="DeBoy R.T."/>
            <person name="Ravel J."/>
            <person name="Paulsen I.T."/>
            <person name="Kolonay J.F."/>
            <person name="Brinkac L.M."/>
            <person name="Beanan M.J."/>
            <person name="Dodson R.J."/>
            <person name="Daugherty S.C."/>
            <person name="Madupu R."/>
            <person name="Angiuoli S.V."/>
            <person name="Durkin A.S."/>
            <person name="Haft D.H."/>
            <person name="Vamathevan J.J."/>
            <person name="Khouri H."/>
            <person name="Utterback T.R."/>
            <person name="Lee C."/>
            <person name="Dimitrov G."/>
            <person name="Jiang L."/>
            <person name="Qin H."/>
            <person name="Weidman J."/>
            <person name="Tran K."/>
            <person name="Kang K.H."/>
            <person name="Hance I.R."/>
            <person name="Nelson K.E."/>
            <person name="Fraser C.M."/>
        </authorList>
    </citation>
    <scope>NUCLEOTIDE SEQUENCE [LARGE SCALE GENOMIC DNA]</scope>
    <source>
        <strain>COL</strain>
    </source>
</reference>
<accession>Q5HHC5</accession>
<feature type="chain" id="PRO_0000137821" description="Argininosuccinate lyase">
    <location>
        <begin position="1"/>
        <end position="459"/>
    </location>
</feature>
<dbReference type="EC" id="4.3.2.1" evidence="1"/>
<dbReference type="EMBL" id="CP000046">
    <property type="protein sequence ID" value="AAW37931.1"/>
    <property type="molecule type" value="Genomic_DNA"/>
</dbReference>
<dbReference type="RefSeq" id="WP_000066053.1">
    <property type="nucleotide sequence ID" value="NZ_JBGOFO010000002.1"/>
</dbReference>
<dbReference type="SMR" id="Q5HHC5"/>
<dbReference type="KEGG" id="sac:SACOL0963"/>
<dbReference type="HOGENOM" id="CLU_027272_2_3_9"/>
<dbReference type="UniPathway" id="UPA00068">
    <property type="reaction ID" value="UER00114"/>
</dbReference>
<dbReference type="Proteomes" id="UP000000530">
    <property type="component" value="Chromosome"/>
</dbReference>
<dbReference type="GO" id="GO:0005829">
    <property type="term" value="C:cytosol"/>
    <property type="evidence" value="ECO:0007669"/>
    <property type="project" value="TreeGrafter"/>
</dbReference>
<dbReference type="GO" id="GO:0004056">
    <property type="term" value="F:argininosuccinate lyase activity"/>
    <property type="evidence" value="ECO:0007669"/>
    <property type="project" value="UniProtKB-UniRule"/>
</dbReference>
<dbReference type="GO" id="GO:0042450">
    <property type="term" value="P:arginine biosynthetic process via ornithine"/>
    <property type="evidence" value="ECO:0007669"/>
    <property type="project" value="InterPro"/>
</dbReference>
<dbReference type="GO" id="GO:0006526">
    <property type="term" value="P:L-arginine biosynthetic process"/>
    <property type="evidence" value="ECO:0007669"/>
    <property type="project" value="UniProtKB-UniRule"/>
</dbReference>
<dbReference type="CDD" id="cd01359">
    <property type="entry name" value="Argininosuccinate_lyase"/>
    <property type="match status" value="1"/>
</dbReference>
<dbReference type="FunFam" id="1.10.275.10:FF:000002">
    <property type="entry name" value="Argininosuccinate lyase"/>
    <property type="match status" value="1"/>
</dbReference>
<dbReference type="FunFam" id="1.10.40.30:FF:000001">
    <property type="entry name" value="Argininosuccinate lyase"/>
    <property type="match status" value="1"/>
</dbReference>
<dbReference type="FunFam" id="1.20.200.10:FF:000006">
    <property type="entry name" value="Argininosuccinate lyase"/>
    <property type="match status" value="1"/>
</dbReference>
<dbReference type="Gene3D" id="1.10.40.30">
    <property type="entry name" value="Fumarase/aspartase (C-terminal domain)"/>
    <property type="match status" value="1"/>
</dbReference>
<dbReference type="Gene3D" id="1.20.200.10">
    <property type="entry name" value="Fumarase/aspartase (Central domain)"/>
    <property type="match status" value="1"/>
</dbReference>
<dbReference type="Gene3D" id="1.10.275.10">
    <property type="entry name" value="Fumarase/aspartase (N-terminal domain)"/>
    <property type="match status" value="1"/>
</dbReference>
<dbReference type="HAMAP" id="MF_00006">
    <property type="entry name" value="Arg_succ_lyase"/>
    <property type="match status" value="1"/>
</dbReference>
<dbReference type="InterPro" id="IPR029419">
    <property type="entry name" value="Arg_succ_lyase_C"/>
</dbReference>
<dbReference type="InterPro" id="IPR009049">
    <property type="entry name" value="Argininosuccinate_lyase"/>
</dbReference>
<dbReference type="InterPro" id="IPR024083">
    <property type="entry name" value="Fumarase/histidase_N"/>
</dbReference>
<dbReference type="InterPro" id="IPR020557">
    <property type="entry name" value="Fumarate_lyase_CS"/>
</dbReference>
<dbReference type="InterPro" id="IPR000362">
    <property type="entry name" value="Fumarate_lyase_fam"/>
</dbReference>
<dbReference type="InterPro" id="IPR022761">
    <property type="entry name" value="Fumarate_lyase_N"/>
</dbReference>
<dbReference type="InterPro" id="IPR008948">
    <property type="entry name" value="L-Aspartase-like"/>
</dbReference>
<dbReference type="NCBIfam" id="TIGR00838">
    <property type="entry name" value="argH"/>
    <property type="match status" value="1"/>
</dbReference>
<dbReference type="PANTHER" id="PTHR43814">
    <property type="entry name" value="ARGININOSUCCINATE LYASE"/>
    <property type="match status" value="1"/>
</dbReference>
<dbReference type="PANTHER" id="PTHR43814:SF1">
    <property type="entry name" value="ARGININOSUCCINATE LYASE"/>
    <property type="match status" value="1"/>
</dbReference>
<dbReference type="Pfam" id="PF14698">
    <property type="entry name" value="ASL_C2"/>
    <property type="match status" value="1"/>
</dbReference>
<dbReference type="Pfam" id="PF00206">
    <property type="entry name" value="Lyase_1"/>
    <property type="match status" value="1"/>
</dbReference>
<dbReference type="PRINTS" id="PR00145">
    <property type="entry name" value="ARGSUCLYASE"/>
</dbReference>
<dbReference type="PRINTS" id="PR00149">
    <property type="entry name" value="FUMRATELYASE"/>
</dbReference>
<dbReference type="SUPFAM" id="SSF48557">
    <property type="entry name" value="L-aspartase-like"/>
    <property type="match status" value="1"/>
</dbReference>
<dbReference type="PROSITE" id="PS00163">
    <property type="entry name" value="FUMARATE_LYASES"/>
    <property type="match status" value="1"/>
</dbReference>
<comment type="catalytic activity">
    <reaction evidence="1">
        <text>2-(N(omega)-L-arginino)succinate = fumarate + L-arginine</text>
        <dbReference type="Rhea" id="RHEA:24020"/>
        <dbReference type="ChEBI" id="CHEBI:29806"/>
        <dbReference type="ChEBI" id="CHEBI:32682"/>
        <dbReference type="ChEBI" id="CHEBI:57472"/>
        <dbReference type="EC" id="4.3.2.1"/>
    </reaction>
</comment>
<comment type="pathway">
    <text evidence="1">Amino-acid biosynthesis; L-arginine biosynthesis; L-arginine from L-ornithine and carbamoyl phosphate: step 3/3.</text>
</comment>
<comment type="subcellular location">
    <subcellularLocation>
        <location evidence="1">Cytoplasm</location>
    </subcellularLocation>
</comment>
<comment type="similarity">
    <text evidence="1">Belongs to the lyase 1 family. Argininosuccinate lyase subfamily.</text>
</comment>
<name>ARLY_STAAC</name>
<proteinExistence type="inferred from homology"/>
<sequence>MSNKAWGGRFEVQPEEWVDDFNASITFDQTLIDQDIEGSIAHATMLANQGIISQQDSEQIIQGLKSIQHDYHQDQIQFSASLEDIHLNIEHELIKRIGDAGGKLHTGRSRNDQVATDMHLYTKKQVQDIIALIKSLQSVIVDIASNNVDTIMPGYTHLQRAQPISFAHHIMTYFWMLQRDQQRFEDSLKRIDINPLGAAALSGTTYPIDRHETTALLNFGSLYENSLDAVSDRDYIIETLHNISLTMVHLSRFAEEIIFWSTDEAKFITLSDAFSTGSSIMPQKKNPDMAELIRGKVGRTTGHLMSMLMTLKGLPLAYNKDMQEDKEGLFDAVHTIKGSLRIFEGMIQTMTINKERLNQTVKEDFSNATELADYLVTKNIPFRTAHEIVGKIVLECIQQGHYLLDVPLATYQQHHSSIDADIYDYLQPENCLKRRQSYGSTGQSSVKQQLDVAKQLLSQ</sequence>